<comment type="function">
    <text evidence="1">A probable ATP-dependent DNA helicase implicated in telomere-length regulation, DNA repair and the maintenance of genomic stability. Acts as an anti-recombinase to counteract toxic recombination and limit crossover during meiosis. Regulates meiotic recombination and crossover homeostasis by physically dissociating strand invasion events and thereby promotes noncrossover repair by meiotic synthesis dependent strand annealing (SDSA) as well as disassembly of D loop recombination intermediates. Also disassembles T loops and prevents telomere fragility by counteracting telomeric G4-DNA structures, which together ensure the dynamics and stability of the telomere.</text>
</comment>
<comment type="catalytic activity">
    <reaction evidence="1">
        <text>ATP + H2O = ADP + phosphate + H(+)</text>
        <dbReference type="Rhea" id="RHEA:13065"/>
        <dbReference type="ChEBI" id="CHEBI:15377"/>
        <dbReference type="ChEBI" id="CHEBI:15378"/>
        <dbReference type="ChEBI" id="CHEBI:30616"/>
        <dbReference type="ChEBI" id="CHEBI:43474"/>
        <dbReference type="ChEBI" id="CHEBI:456216"/>
    </reaction>
</comment>
<comment type="subunit">
    <text evidence="1">Interacts with TERF1. Interacts (via PIP-box) with PCNA; the interaction is direct and essential for suppressing telomere fragility. Interacts with MMS19; the interaction mediates the association of RTEL1 with the cytosolic iron-sulfur protein assembly (CIA) complex.</text>
</comment>
<comment type="subcellular location">
    <subcellularLocation>
        <location evidence="1">Nucleus</location>
    </subcellularLocation>
    <text evidence="1">Colocalizes with PCNA within the replication foci in S-phase cells.</text>
</comment>
<comment type="alternative products">
    <event type="alternative splicing"/>
    <isoform>
        <id>Q6H1L8-1</id>
        <name>1</name>
        <sequence type="displayed"/>
    </isoform>
    <isoform>
        <id>Q6H1L8-2</id>
        <name>2</name>
        <sequence type="described" ref="VSP_036953"/>
    </isoform>
    <isoform>
        <id>Q6H1L8-3</id>
        <name>3</name>
        <sequence type="described" ref="VSP_036953 VSP_036955"/>
    </isoform>
    <isoform>
        <id>Q6H1L8-4</id>
        <name>4</name>
        <sequence type="described" ref="VSP_036951"/>
    </isoform>
    <isoform>
        <id>Q6H1L8-5</id>
        <name>5</name>
        <sequence type="described" ref="VSP_036954"/>
    </isoform>
    <isoform>
        <id>Q6H1L8-6</id>
        <name>6</name>
        <sequence type="described" ref="VSP_036952"/>
    </isoform>
</comment>
<comment type="domain">
    <text evidence="1">The PIP-box (PCNA interacting peptide) motif mediates the interaction with PCNA and localization to replication foci.</text>
</comment>
<comment type="similarity">
    <text evidence="1">Belongs to the helicase family. RAD3/XPD subfamily.</text>
</comment>
<protein>
    <recommendedName>
        <fullName evidence="1">Regulator of telomere elongation helicase 1</fullName>
        <ecNumber evidence="1">5.6.2.-</ecNumber>
    </recommendedName>
</protein>
<evidence type="ECO:0000255" key="1">
    <source>
        <dbReference type="HAMAP-Rule" id="MF_03065"/>
    </source>
</evidence>
<evidence type="ECO:0000256" key="2">
    <source>
        <dbReference type="SAM" id="MobiDB-lite"/>
    </source>
</evidence>
<evidence type="ECO:0000303" key="3">
    <source>
    </source>
</evidence>
<keyword id="KW-0004">4Fe-4S</keyword>
<keyword id="KW-0025">Alternative splicing</keyword>
<keyword id="KW-0067">ATP-binding</keyword>
<keyword id="KW-0227">DNA damage</keyword>
<keyword id="KW-0234">DNA repair</keyword>
<keyword id="KW-0238">DNA-binding</keyword>
<keyword id="KW-0347">Helicase</keyword>
<keyword id="KW-0378">Hydrolase</keyword>
<keyword id="KW-0408">Iron</keyword>
<keyword id="KW-0411">Iron-sulfur</keyword>
<keyword id="KW-0413">Isomerase</keyword>
<keyword id="KW-0479">Metal-binding</keyword>
<keyword id="KW-0547">Nucleotide-binding</keyword>
<keyword id="KW-0539">Nucleus</keyword>
<accession>Q6H1L8</accession>
<accession>Q6H0K8</accession>
<accession>Q6H1L4</accession>
<accession>Q6H1L5</accession>
<accession>Q6H1L6</accession>
<accession>Q6H1L7</accession>
<proteinExistence type="evidence at transcript level"/>
<gene>
    <name type="primary">Rtel1</name>
    <name type="synonym">Rtel</name>
</gene>
<feature type="chain" id="PRO_0000370611" description="Regulator of telomere elongation helicase 1">
    <location>
        <begin position="1"/>
        <end position="1203"/>
    </location>
</feature>
<feature type="domain" description="Helicase ATP-binding" evidence="1">
    <location>
        <begin position="7"/>
        <end position="296"/>
    </location>
</feature>
<feature type="region of interest" description="Disordered" evidence="2">
    <location>
        <begin position="998"/>
        <end position="1020"/>
    </location>
</feature>
<feature type="region of interest" description="Disordered" evidence="2">
    <location>
        <begin position="1120"/>
        <end position="1203"/>
    </location>
</feature>
<feature type="short sequence motif" description="Nuclear localization signal" evidence="1">
    <location>
        <begin position="151"/>
        <end position="167"/>
    </location>
</feature>
<feature type="short sequence motif" description="DEAH box">
    <location>
        <begin position="250"/>
        <end position="253"/>
    </location>
</feature>
<feature type="short sequence motif" description="Nuclear localization signal" evidence="1">
    <location>
        <begin position="871"/>
        <end position="877"/>
    </location>
</feature>
<feature type="short sequence motif" description="PIP-box">
    <location>
        <begin position="1160"/>
        <end position="1167"/>
    </location>
</feature>
<feature type="compositionally biased region" description="Basic and acidic residues" evidence="2">
    <location>
        <begin position="1123"/>
        <end position="1134"/>
    </location>
</feature>
<feature type="compositionally biased region" description="Basic and acidic residues" evidence="2">
    <location>
        <begin position="1169"/>
        <end position="1181"/>
    </location>
</feature>
<feature type="binding site" evidence="1">
    <location>
        <begin position="42"/>
        <end position="49"/>
    </location>
    <ligand>
        <name>ATP</name>
        <dbReference type="ChEBI" id="CHEBI:30616"/>
    </ligand>
</feature>
<feature type="binding site" evidence="1">
    <location>
        <position position="145"/>
    </location>
    <ligand>
        <name>[4Fe-4S] cluster</name>
        <dbReference type="ChEBI" id="CHEBI:49883"/>
    </ligand>
</feature>
<feature type="binding site" evidence="1">
    <location>
        <position position="163"/>
    </location>
    <ligand>
        <name>[4Fe-4S] cluster</name>
        <dbReference type="ChEBI" id="CHEBI:49883"/>
    </ligand>
</feature>
<feature type="binding site" evidence="1">
    <location>
        <position position="172"/>
    </location>
    <ligand>
        <name>[4Fe-4S] cluster</name>
        <dbReference type="ChEBI" id="CHEBI:49883"/>
    </ligand>
</feature>
<feature type="binding site" evidence="1">
    <location>
        <position position="207"/>
    </location>
    <ligand>
        <name>[4Fe-4S] cluster</name>
        <dbReference type="ChEBI" id="CHEBI:49883"/>
    </ligand>
</feature>
<feature type="splice variant" id="VSP_036951" description="In isoform 4." evidence="3">
    <original>GKSELESKLTLSEGVDRQLDPGQHLNHGQPHLSAHPTSK</original>
    <variation>AHFSKP</variation>
    <location>
        <begin position="981"/>
        <end position="1019"/>
    </location>
</feature>
<feature type="splice variant" id="VSP_036952" description="In isoform 6." evidence="3">
    <location>
        <begin position="981"/>
        <end position="1019"/>
    </location>
</feature>
<feature type="splice variant" id="VSP_036953" description="In isoform 2 and isoform 3." evidence="3">
    <original>K</original>
    <variation>KAHFSKP</variation>
    <location>
        <position position="1019"/>
    </location>
</feature>
<feature type="splice variant" id="VSP_036954" description="In isoform 5." evidence="3">
    <location>
        <begin position="1021"/>
        <end position="1095"/>
    </location>
</feature>
<feature type="splice variant" id="VSP_036955" description="In isoform 3." evidence="3">
    <original>GPSMSKKPEKTQSKISSFFRQRPDESVRSDDTTPKPMQLPPRLPHELMKPHRSKQ</original>
    <variation>AIFRALDVQET</variation>
    <location>
        <begin position="1149"/>
        <end position="1203"/>
    </location>
</feature>
<organism>
    <name type="scientific">Mus spretus</name>
    <name type="common">Western Mediterranean mouse</name>
    <name type="synonym">Algerian mouse</name>
    <dbReference type="NCBI Taxonomy" id="10096"/>
    <lineage>
        <taxon>Eukaryota</taxon>
        <taxon>Metazoa</taxon>
        <taxon>Chordata</taxon>
        <taxon>Craniata</taxon>
        <taxon>Vertebrata</taxon>
        <taxon>Euteleostomi</taxon>
        <taxon>Mammalia</taxon>
        <taxon>Eutheria</taxon>
        <taxon>Euarchontoglires</taxon>
        <taxon>Glires</taxon>
        <taxon>Rodentia</taxon>
        <taxon>Myomorpha</taxon>
        <taxon>Muroidea</taxon>
        <taxon>Muridae</taxon>
        <taxon>Murinae</taxon>
        <taxon>Mus</taxon>
        <taxon>Mus</taxon>
    </lineage>
</organism>
<sequence>MPRVVLNGVTVDFPFQPYPCQQEYMTKVLECLQKKVNGILESPTGTGKTLCLLCSTLAWQQHLRDAISSLKIAERVQGELFASRTLSSWGSAAAASGDSIECYTDIPKIIYASRTHSQPTQVIRELRNTAYRPKVCVLGSREQLCIHPEVKKQESNHMQISLCRKKVASRSCHFYNNVEAKFLEQDLATPILDIEDLVKNGSKQKMCPYYLSRNMKQQADIIFMPYNYLLDAKSRKAHSIDLKGTVVIFDEAHNVEKICEESASFDLTPRDVASGLEIINQVLEEQARVTQQGELQQEFIVDTSSSGLNMELEDIAKLKMILLRLEEAIDAVQLPGDDRGVTKPGSYIFELFAEAQITFQTKGCILESLDQIIQHLAGRTGVFTNTAGLQKLMDIIQIVFSVDPPEGSPGSLVGLGISHSYKVHIHPETSHRRAAKRSDAWSTTASRKQGKVLSYWCFSPSQSMRELVCQGVRTLILTSGTLAPLSSFALEKQIPFPVCLENPHIIDKNQLWVGIVPRGPDGVQLSSAYDKRFSEECLSSLGKALSNIARVVPHGLLVFFPSYPVMEKSLEFWQVQGLARKVEALKPLFVEPRNKGSFSEVIDAYYQQVASPASNGATFLAVCRGKASEGLDFSDMNGRGVIVTGLPYPPRMDPRVVLKMQFLDEMRGRSGVGGQCLSGQEWYQQQASRAVNQAIGRVIRHRHDYGAIFLCDHRFAYADARAQLPSWVRPYLKVYDNFGHAIRDVAQFLRVAQKTMPLPVPQAVTSSVSEGEIALKDATLSSYSLSTRKAISLDVHVPSLRQKSIGLPAAGDPESSLCGEYEQQTFSAQQRPMGLLAALEYNEQKAGASEEQALGSSTPSLRFEKRLSTEQKGGRKKVRLVNHPEEPMAGTQAGRAKMFMVAVKQALSQANFDTFTQALQHYKSSDDFEALVASLTCLFAEDPKKHTLLKGFYQFVRPHHKQQFEDICFQLTGQRCGYQPGKSELESKLTLSEGVDRQLDPGQHLNHGQPHLSAHPTSKGHTSHCTKVGCAVEKPGQPAVSDYLSDVHKALGSASCNQLTAALRAYKQDDDLDKVVAVVAALTTAKPEHLPLLQRFGMFVRRHHKPQFLQTCADLMGLPTTGKDLELEGPRDESPTVPPELTHEDLKPGPSMSKKPEKTQSKISSFFRQRPDESVRSDDTTPKPMQLPPRLPHELMKPHRSKQ</sequence>
<reference key="1">
    <citation type="journal article" date="2004" name="Cell">
        <title>Regulation of murine telomere length by Rtel: an essential gene encoding a helicase-like protein.</title>
        <authorList>
            <person name="Ding H."/>
            <person name="Schertzer M."/>
            <person name="Wu X."/>
            <person name="Gertsenstein M."/>
            <person name="Selig S."/>
            <person name="Kammori M."/>
            <person name="Pourvali R."/>
            <person name="Poon S."/>
            <person name="Vulto I."/>
            <person name="Chavez E."/>
            <person name="Tam P.P.L."/>
            <person name="Nagy A."/>
            <person name="Lansdorp P.M."/>
        </authorList>
    </citation>
    <scope>NUCLEOTIDE SEQUENCE [MRNA] (ISOFORMS 1; 2; 3; 4; 5 AND 6)</scope>
    <source>
        <tissue>Testis</tissue>
    </source>
</reference>
<dbReference type="EC" id="5.6.2.-" evidence="1"/>
<dbReference type="EMBL" id="AY481613">
    <property type="protein sequence ID" value="AAR27228.1"/>
    <property type="molecule type" value="mRNA"/>
</dbReference>
<dbReference type="EMBL" id="AY481614">
    <property type="protein sequence ID" value="AAR27229.1"/>
    <property type="molecule type" value="mRNA"/>
</dbReference>
<dbReference type="EMBL" id="AY481615">
    <property type="protein sequence ID" value="AAR27230.1"/>
    <property type="molecule type" value="mRNA"/>
</dbReference>
<dbReference type="EMBL" id="AY481616">
    <property type="protein sequence ID" value="AAR27231.1"/>
    <property type="molecule type" value="mRNA"/>
</dbReference>
<dbReference type="EMBL" id="AY481617">
    <property type="protein sequence ID" value="AAR27232.1"/>
    <property type="molecule type" value="mRNA"/>
</dbReference>
<dbReference type="EMBL" id="AY530632">
    <property type="protein sequence ID" value="AAS98192.1"/>
    <property type="molecule type" value="mRNA"/>
</dbReference>
<dbReference type="SMR" id="Q6H1L8"/>
<dbReference type="MGI" id="MGI:2139369">
    <property type="gene designation" value="Rtel1"/>
</dbReference>
<dbReference type="GO" id="GO:0005634">
    <property type="term" value="C:nucleus"/>
    <property type="evidence" value="ECO:0000250"/>
    <property type="project" value="UniProtKB"/>
</dbReference>
<dbReference type="GO" id="GO:0051539">
    <property type="term" value="F:4 iron, 4 sulfur cluster binding"/>
    <property type="evidence" value="ECO:0007669"/>
    <property type="project" value="UniProtKB-UniRule"/>
</dbReference>
<dbReference type="GO" id="GO:0005524">
    <property type="term" value="F:ATP binding"/>
    <property type="evidence" value="ECO:0000250"/>
    <property type="project" value="UniProtKB"/>
</dbReference>
<dbReference type="GO" id="GO:0016887">
    <property type="term" value="F:ATP hydrolysis activity"/>
    <property type="evidence" value="ECO:0007669"/>
    <property type="project" value="RHEA"/>
</dbReference>
<dbReference type="GO" id="GO:0003677">
    <property type="term" value="F:DNA binding"/>
    <property type="evidence" value="ECO:0007669"/>
    <property type="project" value="UniProtKB-UniRule"/>
</dbReference>
<dbReference type="GO" id="GO:0003678">
    <property type="term" value="F:DNA helicase activity"/>
    <property type="evidence" value="ECO:0000250"/>
    <property type="project" value="UniProtKB"/>
</dbReference>
<dbReference type="GO" id="GO:0070182">
    <property type="term" value="F:DNA polymerase binding"/>
    <property type="evidence" value="ECO:0007669"/>
    <property type="project" value="TreeGrafter"/>
</dbReference>
<dbReference type="GO" id="GO:0046872">
    <property type="term" value="F:metal ion binding"/>
    <property type="evidence" value="ECO:0007669"/>
    <property type="project" value="UniProtKB-UniRule"/>
</dbReference>
<dbReference type="GO" id="GO:0006310">
    <property type="term" value="P:DNA recombination"/>
    <property type="evidence" value="ECO:0007669"/>
    <property type="project" value="InterPro"/>
</dbReference>
<dbReference type="GO" id="GO:0006281">
    <property type="term" value="P:DNA repair"/>
    <property type="evidence" value="ECO:0007669"/>
    <property type="project" value="UniProtKB-UniRule"/>
</dbReference>
<dbReference type="GO" id="GO:0006260">
    <property type="term" value="P:DNA replication"/>
    <property type="evidence" value="ECO:0007669"/>
    <property type="project" value="InterPro"/>
</dbReference>
<dbReference type="GO" id="GO:0045910">
    <property type="term" value="P:negative regulation of DNA recombination"/>
    <property type="evidence" value="ECO:0007669"/>
    <property type="project" value="TreeGrafter"/>
</dbReference>
<dbReference type="GO" id="GO:1904430">
    <property type="term" value="P:negative regulation of t-circle formation"/>
    <property type="evidence" value="ECO:0007669"/>
    <property type="project" value="TreeGrafter"/>
</dbReference>
<dbReference type="GO" id="GO:0010569">
    <property type="term" value="P:regulation of double-strand break repair via homologous recombination"/>
    <property type="evidence" value="ECO:0000250"/>
    <property type="project" value="UniProtKB"/>
</dbReference>
<dbReference type="GO" id="GO:0000723">
    <property type="term" value="P:telomere maintenance"/>
    <property type="evidence" value="ECO:0000250"/>
    <property type="project" value="UniProtKB"/>
</dbReference>
<dbReference type="GO" id="GO:0090657">
    <property type="term" value="P:telomeric loop disassembly"/>
    <property type="evidence" value="ECO:0007669"/>
    <property type="project" value="TreeGrafter"/>
</dbReference>
<dbReference type="CDD" id="cd17970">
    <property type="entry name" value="DEAHc_FancJ"/>
    <property type="match status" value="1"/>
</dbReference>
<dbReference type="CDD" id="cd13932">
    <property type="entry name" value="HN_RTEL1"/>
    <property type="match status" value="2"/>
</dbReference>
<dbReference type="CDD" id="cd18788">
    <property type="entry name" value="SF2_C_XPD"/>
    <property type="match status" value="1"/>
</dbReference>
<dbReference type="FunFam" id="1.20.1160.20:FF:000006">
    <property type="entry name" value="Regulator of telomere elongation helicase 1"/>
    <property type="match status" value="1"/>
</dbReference>
<dbReference type="FunFam" id="1.20.1160.20:FF:000009">
    <property type="entry name" value="Regulator of telomere elongation helicase 1"/>
    <property type="match status" value="1"/>
</dbReference>
<dbReference type="FunFam" id="3.40.50.300:FF:000431">
    <property type="entry name" value="Regulator of telomere elongation helicase 1"/>
    <property type="match status" value="1"/>
</dbReference>
<dbReference type="FunFam" id="3.40.50.300:FF:000691">
    <property type="entry name" value="Regulator of telomere elongation helicase 1"/>
    <property type="match status" value="1"/>
</dbReference>
<dbReference type="Gene3D" id="1.20.1160.20">
    <property type="match status" value="2"/>
</dbReference>
<dbReference type="Gene3D" id="3.40.50.300">
    <property type="entry name" value="P-loop containing nucleotide triphosphate hydrolases"/>
    <property type="match status" value="2"/>
</dbReference>
<dbReference type="HAMAP" id="MF_03065">
    <property type="entry name" value="RTEL1"/>
    <property type="match status" value="1"/>
</dbReference>
<dbReference type="InterPro" id="IPR006555">
    <property type="entry name" value="ATP-dep_Helicase_C"/>
</dbReference>
<dbReference type="InterPro" id="IPR045028">
    <property type="entry name" value="DinG/Rad3-like"/>
</dbReference>
<dbReference type="InterPro" id="IPR014013">
    <property type="entry name" value="Helic_SF1/SF2_ATP-bd_DinG/Rad3"/>
</dbReference>
<dbReference type="InterPro" id="IPR006554">
    <property type="entry name" value="Helicase-like_DEXD_c2"/>
</dbReference>
<dbReference type="InterPro" id="IPR049909">
    <property type="entry name" value="HHD_RTEL1"/>
</dbReference>
<dbReference type="InterPro" id="IPR027417">
    <property type="entry name" value="P-loop_NTPase"/>
</dbReference>
<dbReference type="InterPro" id="IPR010614">
    <property type="entry name" value="RAD3-like_helicase_DEAD"/>
</dbReference>
<dbReference type="InterPro" id="IPR013020">
    <property type="entry name" value="Rad3/Chl1-like"/>
</dbReference>
<dbReference type="InterPro" id="IPR030845">
    <property type="entry name" value="RTEL1"/>
</dbReference>
<dbReference type="NCBIfam" id="TIGR00604">
    <property type="entry name" value="rad3"/>
    <property type="match status" value="1"/>
</dbReference>
<dbReference type="PANTHER" id="PTHR11472">
    <property type="entry name" value="DNA REPAIR DEAD HELICASE RAD3/XP-D SUBFAMILY MEMBER"/>
    <property type="match status" value="1"/>
</dbReference>
<dbReference type="PANTHER" id="PTHR11472:SF34">
    <property type="entry name" value="REGULATOR OF TELOMERE ELONGATION HELICASE 1"/>
    <property type="match status" value="1"/>
</dbReference>
<dbReference type="Pfam" id="PF23109">
    <property type="entry name" value="ARCH_RTEL1"/>
    <property type="match status" value="1"/>
</dbReference>
<dbReference type="Pfam" id="PF06733">
    <property type="entry name" value="DEAD_2"/>
    <property type="match status" value="1"/>
</dbReference>
<dbReference type="Pfam" id="PF13307">
    <property type="entry name" value="Helicase_C_2"/>
    <property type="match status" value="1"/>
</dbReference>
<dbReference type="Pfam" id="PF23116">
    <property type="entry name" value="HHD_RTEL1"/>
    <property type="match status" value="2"/>
</dbReference>
<dbReference type="SMART" id="SM00488">
    <property type="entry name" value="DEXDc2"/>
    <property type="match status" value="1"/>
</dbReference>
<dbReference type="SMART" id="SM00491">
    <property type="entry name" value="HELICc2"/>
    <property type="match status" value="1"/>
</dbReference>
<dbReference type="SUPFAM" id="SSF52540">
    <property type="entry name" value="P-loop containing nucleoside triphosphate hydrolases"/>
    <property type="match status" value="2"/>
</dbReference>
<dbReference type="PROSITE" id="PS51193">
    <property type="entry name" value="HELICASE_ATP_BIND_2"/>
    <property type="match status" value="1"/>
</dbReference>
<name>RTEL1_MUSSP</name>